<keyword id="KW-1015">Disulfide bond</keyword>
<keyword id="KW-0378">Hydrolase</keyword>
<keyword id="KW-0964">Secreted</keyword>
<keyword id="KW-0719">Serine esterase</keyword>
<keyword id="KW-0732">Signal</keyword>
<sequence>MNLRLLTLALAAVAAASPVDIQERQLSGGNELRDGSCKPITFIFARASTEPGLLGISTGPAVCNGLKMAKAGQVACQGVGPKYTADLASNALPENTSPAAIQEAQDLFQQAVTKCPDTQIVAGGYSQGTAVMDDSIKRLPDNVKEKIKGVVLFGYTRNAQEHGQIANFPKDKVKVYCAVGDMVCDGTLIVGPAHFTYLGNTGEATQFLLGKLSASSSSSSSSGSSDTSSASTSAAADSSSSSSSSSSPFGNLGNLFGGL</sequence>
<accession>B8NBB2</accession>
<protein>
    <recommendedName>
        <fullName>Probable cutinase 2</fullName>
        <ecNumber evidence="5 6">3.1.1.74</ecNumber>
    </recommendedName>
    <alternativeName>
        <fullName>Cutin hydrolase 2</fullName>
    </alternativeName>
</protein>
<comment type="function">
    <text evidence="1">Catalyzes the hydrolysis of complex carboxylic polyesters found in the cell wall of plants (By similarity). Degrades cutin, a macromolecule that forms the structure of the plant cuticle (By similarity).</text>
</comment>
<comment type="catalytic activity">
    <reaction evidence="5 6">
        <text>cutin + H2O = cutin monomers.</text>
        <dbReference type="EC" id="3.1.1.74"/>
    </reaction>
</comment>
<comment type="subcellular location">
    <subcellularLocation>
        <location evidence="2">Secreted</location>
    </subcellularLocation>
</comment>
<comment type="similarity">
    <text evidence="8">Belongs to the cutinase family.</text>
</comment>
<comment type="sequence caution" evidence="8">
    <conflict type="erroneous initiation">
        <sequence resource="EMBL-CDS" id="EED52785"/>
    </conflict>
    <text>Extended N-terminus.</text>
</comment>
<name>CUTI2_ASPFN</name>
<organism>
    <name type="scientific">Aspergillus flavus (strain ATCC 200026 / FGSC A1120 / IAM 13836 / NRRL 3357 / JCM 12722 / SRRC 167)</name>
    <dbReference type="NCBI Taxonomy" id="332952"/>
    <lineage>
        <taxon>Eukaryota</taxon>
        <taxon>Fungi</taxon>
        <taxon>Dikarya</taxon>
        <taxon>Ascomycota</taxon>
        <taxon>Pezizomycotina</taxon>
        <taxon>Eurotiomycetes</taxon>
        <taxon>Eurotiomycetidae</taxon>
        <taxon>Eurotiales</taxon>
        <taxon>Aspergillaceae</taxon>
        <taxon>Aspergillus</taxon>
        <taxon>Aspergillus subgen. Circumdati</taxon>
    </lineage>
</organism>
<reference key="1">
    <citation type="journal article" date="2015" name="Genome Announc.">
        <title>Genome sequence of Aspergillus flavus NRRL 3357, a strain that causes aflatoxin contamination of food and feed.</title>
        <authorList>
            <person name="Nierman W.C."/>
            <person name="Yu J."/>
            <person name="Fedorova-Abrams N.D."/>
            <person name="Losada L."/>
            <person name="Cleveland T.E."/>
            <person name="Bhatnagar D."/>
            <person name="Bennett J.W."/>
            <person name="Dean R."/>
            <person name="Payne G.A."/>
        </authorList>
    </citation>
    <scope>NUCLEOTIDE SEQUENCE [LARGE SCALE GENOMIC DNA]</scope>
    <source>
        <strain>ATCC 200026 / FGSC A1120 / IAM 13836 / NRRL 3357 / JCM 12722 / SRRC 167</strain>
    </source>
</reference>
<dbReference type="EC" id="3.1.1.74" evidence="5 6"/>
<dbReference type="EMBL" id="EQ963476">
    <property type="protein sequence ID" value="EED52785.1"/>
    <property type="status" value="ALT_INIT"/>
    <property type="molecule type" value="Genomic_DNA"/>
</dbReference>
<dbReference type="RefSeq" id="XP_002377949.1">
    <property type="nucleotide sequence ID" value="XM_002377908.1"/>
</dbReference>
<dbReference type="SMR" id="B8NBB2"/>
<dbReference type="ESTHER" id="aspor-cuti2">
    <property type="family name" value="Cutinase"/>
</dbReference>
<dbReference type="EnsemblFungi" id="EED52785">
    <property type="protein sequence ID" value="EED52785"/>
    <property type="gene ID" value="AFLA_044870"/>
</dbReference>
<dbReference type="VEuPathDB" id="FungiDB:AFLA_008067"/>
<dbReference type="eggNOG" id="ENOG502SI38">
    <property type="taxonomic scope" value="Eukaryota"/>
</dbReference>
<dbReference type="GO" id="GO:0005576">
    <property type="term" value="C:extracellular region"/>
    <property type="evidence" value="ECO:0007669"/>
    <property type="project" value="UniProtKB-SubCell"/>
</dbReference>
<dbReference type="GO" id="GO:0050525">
    <property type="term" value="F:cutinase activity"/>
    <property type="evidence" value="ECO:0000250"/>
    <property type="project" value="UniProtKB"/>
</dbReference>
<dbReference type="GO" id="GO:0016052">
    <property type="term" value="P:carbohydrate catabolic process"/>
    <property type="evidence" value="ECO:0007669"/>
    <property type="project" value="TreeGrafter"/>
</dbReference>
<dbReference type="FunFam" id="3.40.50.1820:FF:000235">
    <property type="entry name" value="Cutinase 1"/>
    <property type="match status" value="1"/>
</dbReference>
<dbReference type="Gene3D" id="3.40.50.1820">
    <property type="entry name" value="alpha/beta hydrolase"/>
    <property type="match status" value="1"/>
</dbReference>
<dbReference type="InterPro" id="IPR029058">
    <property type="entry name" value="AB_hydrolase_fold"/>
</dbReference>
<dbReference type="InterPro" id="IPR000675">
    <property type="entry name" value="Cutinase/axe"/>
</dbReference>
<dbReference type="InterPro" id="IPR043580">
    <property type="entry name" value="CUTINASE_1"/>
</dbReference>
<dbReference type="InterPro" id="IPR043579">
    <property type="entry name" value="CUTINASE_2"/>
</dbReference>
<dbReference type="InterPro" id="IPR011150">
    <property type="entry name" value="Cutinase_monf"/>
</dbReference>
<dbReference type="PANTHER" id="PTHR48250:SF3">
    <property type="entry name" value="CUTINASE 1-RELATED"/>
    <property type="match status" value="1"/>
</dbReference>
<dbReference type="PANTHER" id="PTHR48250">
    <property type="entry name" value="CUTINASE 2-RELATED"/>
    <property type="match status" value="1"/>
</dbReference>
<dbReference type="Pfam" id="PF01083">
    <property type="entry name" value="Cutinase"/>
    <property type="match status" value="1"/>
</dbReference>
<dbReference type="PRINTS" id="PR00129">
    <property type="entry name" value="CUTINASE"/>
</dbReference>
<dbReference type="SMART" id="SM01110">
    <property type="entry name" value="Cutinase"/>
    <property type="match status" value="1"/>
</dbReference>
<dbReference type="SUPFAM" id="SSF53474">
    <property type="entry name" value="alpha/beta-Hydrolases"/>
    <property type="match status" value="1"/>
</dbReference>
<dbReference type="PROSITE" id="PS00155">
    <property type="entry name" value="CUTINASE_1"/>
    <property type="match status" value="1"/>
</dbReference>
<dbReference type="PROSITE" id="PS00931">
    <property type="entry name" value="CUTINASE_2"/>
    <property type="match status" value="1"/>
</dbReference>
<evidence type="ECO:0000250" key="1">
    <source>
        <dbReference type="UniProtKB" id="P00590"/>
    </source>
</evidence>
<evidence type="ECO:0000250" key="2">
    <source>
        <dbReference type="UniProtKB" id="P11373"/>
    </source>
</evidence>
<evidence type="ECO:0000250" key="3">
    <source>
        <dbReference type="UniProtKB" id="P52956"/>
    </source>
</evidence>
<evidence type="ECO:0000255" key="4"/>
<evidence type="ECO:0000255" key="5">
    <source>
        <dbReference type="PROSITE-ProRule" id="PRU10108"/>
    </source>
</evidence>
<evidence type="ECO:0000255" key="6">
    <source>
        <dbReference type="PROSITE-ProRule" id="PRU10109"/>
    </source>
</evidence>
<evidence type="ECO:0000256" key="7">
    <source>
        <dbReference type="SAM" id="MobiDB-lite"/>
    </source>
</evidence>
<evidence type="ECO:0000305" key="8"/>
<gene>
    <name type="ORF">AFLA_044870</name>
</gene>
<proteinExistence type="inferred from homology"/>
<feature type="signal peptide" evidence="4">
    <location>
        <begin position="1"/>
        <end position="16"/>
    </location>
</feature>
<feature type="chain" id="PRO_0000395248" description="Probable cutinase 2">
    <location>
        <begin position="17"/>
        <end position="259"/>
    </location>
</feature>
<feature type="region of interest" description="Disordered" evidence="7">
    <location>
        <begin position="215"/>
        <end position="259"/>
    </location>
</feature>
<feature type="active site" description="Nucleophile" evidence="1">
    <location>
        <position position="126"/>
    </location>
</feature>
<feature type="active site" evidence="1">
    <location>
        <position position="181"/>
    </location>
</feature>
<feature type="active site" description="Proton donor/acceptor" evidence="1">
    <location>
        <position position="194"/>
    </location>
</feature>
<feature type="site" description="Transition state stabilizer" evidence="1">
    <location>
        <position position="48"/>
    </location>
</feature>
<feature type="site" description="Transition state stabilizer" evidence="1">
    <location>
        <position position="127"/>
    </location>
</feature>
<feature type="disulfide bond" evidence="3">
    <location>
        <begin position="37"/>
        <end position="115"/>
    </location>
</feature>
<feature type="disulfide bond" evidence="3">
    <location>
        <begin position="63"/>
        <end position="76"/>
    </location>
</feature>
<feature type="disulfide bond" evidence="3">
    <location>
        <begin position="177"/>
        <end position="184"/>
    </location>
</feature>